<reference key="1">
    <citation type="submission" date="2001-07" db="EMBL/GenBank/DDBJ databases">
        <title>Genome-wide discovery and analysis of human seven transmembrane helix receptor genes.</title>
        <authorList>
            <person name="Suwa M."/>
            <person name="Sato T."/>
            <person name="Okouchi I."/>
            <person name="Arita M."/>
            <person name="Futami K."/>
            <person name="Matsumoto S."/>
            <person name="Tsutsumi S."/>
            <person name="Aburatani H."/>
            <person name="Asai K."/>
            <person name="Akiyama Y."/>
        </authorList>
    </citation>
    <scope>NUCLEOTIDE SEQUENCE [GENOMIC DNA]</scope>
</reference>
<reference key="2">
    <citation type="submission" date="2005-07" db="EMBL/GenBank/DDBJ databases">
        <authorList>
            <person name="Mural R.J."/>
            <person name="Istrail S."/>
            <person name="Sutton G.G."/>
            <person name="Florea L."/>
            <person name="Halpern A.L."/>
            <person name="Mobarry C.M."/>
            <person name="Lippert R."/>
            <person name="Walenz B."/>
            <person name="Shatkay H."/>
            <person name="Dew I."/>
            <person name="Miller J.R."/>
            <person name="Flanigan M.J."/>
            <person name="Edwards N.J."/>
            <person name="Bolanos R."/>
            <person name="Fasulo D."/>
            <person name="Halldorsson B.V."/>
            <person name="Hannenhalli S."/>
            <person name="Turner R."/>
            <person name="Yooseph S."/>
            <person name="Lu F."/>
            <person name="Nusskern D.R."/>
            <person name="Shue B.C."/>
            <person name="Zheng X.H."/>
            <person name="Zhong F."/>
            <person name="Delcher A.L."/>
            <person name="Huson D.H."/>
            <person name="Kravitz S.A."/>
            <person name="Mouchard L."/>
            <person name="Reinert K."/>
            <person name="Remington K.A."/>
            <person name="Clark A.G."/>
            <person name="Waterman M.S."/>
            <person name="Eichler E.E."/>
            <person name="Adams M.D."/>
            <person name="Hunkapiller M.W."/>
            <person name="Myers E.W."/>
            <person name="Venter J.C."/>
        </authorList>
    </citation>
    <scope>NUCLEOTIDE SEQUENCE [LARGE SCALE GENOMIC DNA]</scope>
</reference>
<reference key="3">
    <citation type="journal article" date="2002" name="Genomics">
        <title>DEFOG: a practical scheme for deciphering families of genes.</title>
        <authorList>
            <person name="Fuchs T."/>
            <person name="Malecova B."/>
            <person name="Linhart C."/>
            <person name="Sharan R."/>
            <person name="Khen M."/>
            <person name="Herwig R."/>
            <person name="Shmulevich D."/>
            <person name="Elkon R."/>
            <person name="Steinfath M."/>
            <person name="O'Brien J.K."/>
            <person name="Radelof U."/>
            <person name="Lehrach H."/>
            <person name="Lancet D."/>
            <person name="Shamir R."/>
        </authorList>
    </citation>
    <scope>NUCLEOTIDE SEQUENCE [GENOMIC DNA] OF 69-285</scope>
</reference>
<reference key="4">
    <citation type="journal article" date="2004" name="Proc. Natl. Acad. Sci. U.S.A.">
        <title>The human olfactory receptor gene family.</title>
        <authorList>
            <person name="Malnic B."/>
            <person name="Godfrey P.A."/>
            <person name="Buck L.B."/>
        </authorList>
    </citation>
    <scope>IDENTIFICATION</scope>
</reference>
<reference key="5">
    <citation type="journal article" date="2004" name="Proc. Natl. Acad. Sci. U.S.A.">
        <authorList>
            <person name="Malnic B."/>
            <person name="Godfrey P.A."/>
            <person name="Buck L.B."/>
        </authorList>
    </citation>
    <scope>ERRATUM OF PUBMED:14983052</scope>
</reference>
<feature type="chain" id="PRO_0000150705" description="Olfactory receptor 10H4">
    <location>
        <begin position="1"/>
        <end position="316"/>
    </location>
</feature>
<feature type="topological domain" description="Extracellular" evidence="1">
    <location>
        <begin position="1"/>
        <end position="26"/>
    </location>
</feature>
<feature type="transmembrane region" description="Helical; Name=1" evidence="1">
    <location>
        <begin position="27"/>
        <end position="47"/>
    </location>
</feature>
<feature type="topological domain" description="Cytoplasmic" evidence="1">
    <location>
        <begin position="48"/>
        <end position="55"/>
    </location>
</feature>
<feature type="transmembrane region" description="Helical; Name=2" evidence="1">
    <location>
        <begin position="56"/>
        <end position="76"/>
    </location>
</feature>
<feature type="topological domain" description="Extracellular" evidence="1">
    <location>
        <begin position="77"/>
        <end position="100"/>
    </location>
</feature>
<feature type="transmembrane region" description="Helical; Name=3" evidence="1">
    <location>
        <begin position="101"/>
        <end position="121"/>
    </location>
</feature>
<feature type="topological domain" description="Cytoplasmic" evidence="1">
    <location>
        <begin position="122"/>
        <end position="140"/>
    </location>
</feature>
<feature type="transmembrane region" description="Helical; Name=4" evidence="1">
    <location>
        <begin position="141"/>
        <end position="161"/>
    </location>
</feature>
<feature type="topological domain" description="Extracellular" evidence="1">
    <location>
        <begin position="162"/>
        <end position="198"/>
    </location>
</feature>
<feature type="transmembrane region" description="Helical; Name=5" evidence="1">
    <location>
        <begin position="199"/>
        <end position="219"/>
    </location>
</feature>
<feature type="topological domain" description="Cytoplasmic" evidence="1">
    <location>
        <begin position="220"/>
        <end position="239"/>
    </location>
</feature>
<feature type="transmembrane region" description="Helical; Name=6" evidence="1">
    <location>
        <begin position="240"/>
        <end position="260"/>
    </location>
</feature>
<feature type="topological domain" description="Extracellular" evidence="1">
    <location>
        <begin position="261"/>
        <end position="273"/>
    </location>
</feature>
<feature type="transmembrane region" description="Helical; Name=7" evidence="1">
    <location>
        <begin position="274"/>
        <end position="294"/>
    </location>
</feature>
<feature type="topological domain" description="Cytoplasmic" evidence="1">
    <location>
        <begin position="295"/>
        <end position="316"/>
    </location>
</feature>
<feature type="glycosylation site" description="N-linked (GlcNAc...) asparagine" evidence="1">
    <location>
        <position position="5"/>
    </location>
</feature>
<feature type="disulfide bond" evidence="2">
    <location>
        <begin position="98"/>
        <end position="190"/>
    </location>
</feature>
<feature type="sequence variant" id="VAR_034290" description="In dbSNP:rs16980994.">
    <original>N</original>
    <variation>K</variation>
    <location>
        <position position="100"/>
    </location>
</feature>
<feature type="sequence variant" id="VAR_034291" description="In dbSNP:rs16980822.">
    <original>H</original>
    <variation>R</variation>
    <location>
        <position position="144"/>
    </location>
</feature>
<feature type="sequence variant" id="VAR_062063" description="In dbSNP:rs11880184.">
    <original>T</original>
    <variation>A</variation>
    <location>
        <position position="281"/>
    </location>
</feature>
<protein>
    <recommendedName>
        <fullName>Olfactory receptor 10H4</fullName>
    </recommendedName>
    <alternativeName>
        <fullName>Olfactory receptor OR19-28</fullName>
    </alternativeName>
</protein>
<gene>
    <name type="primary">OR10H4</name>
</gene>
<organism>
    <name type="scientific">Homo sapiens</name>
    <name type="common">Human</name>
    <dbReference type="NCBI Taxonomy" id="9606"/>
    <lineage>
        <taxon>Eukaryota</taxon>
        <taxon>Metazoa</taxon>
        <taxon>Chordata</taxon>
        <taxon>Craniata</taxon>
        <taxon>Vertebrata</taxon>
        <taxon>Euteleostomi</taxon>
        <taxon>Mammalia</taxon>
        <taxon>Eutheria</taxon>
        <taxon>Euarchontoglires</taxon>
        <taxon>Primates</taxon>
        <taxon>Haplorrhini</taxon>
        <taxon>Catarrhini</taxon>
        <taxon>Hominidae</taxon>
        <taxon>Homo</taxon>
    </lineage>
</organism>
<proteinExistence type="inferred from homology"/>
<name>O10H4_HUMAN</name>
<keyword id="KW-1003">Cell membrane</keyword>
<keyword id="KW-1015">Disulfide bond</keyword>
<keyword id="KW-0297">G-protein coupled receptor</keyword>
<keyword id="KW-0325">Glycoprotein</keyword>
<keyword id="KW-0472">Membrane</keyword>
<keyword id="KW-0552">Olfaction</keyword>
<keyword id="KW-0675">Receptor</keyword>
<keyword id="KW-1185">Reference proteome</keyword>
<keyword id="KW-0716">Sensory transduction</keyword>
<keyword id="KW-0807">Transducer</keyword>
<keyword id="KW-0812">Transmembrane</keyword>
<keyword id="KW-1133">Transmembrane helix</keyword>
<accession>Q8NGA5</accession>
<accession>Q6IFJ2</accession>
<accession>Q96R57</accession>
<dbReference type="EMBL" id="AB065921">
    <property type="protein sequence ID" value="BAC06136.1"/>
    <property type="molecule type" value="Genomic_DNA"/>
</dbReference>
<dbReference type="EMBL" id="CH471106">
    <property type="protein sequence ID" value="EAW84516.1"/>
    <property type="molecule type" value="Genomic_DNA"/>
</dbReference>
<dbReference type="EMBL" id="AF399586">
    <property type="protein sequence ID" value="AAK95071.1"/>
    <property type="molecule type" value="Genomic_DNA"/>
</dbReference>
<dbReference type="EMBL" id="BK004270">
    <property type="protein sequence ID" value="DAA04668.1"/>
    <property type="molecule type" value="Genomic_DNA"/>
</dbReference>
<dbReference type="CCDS" id="CCDS32941.1"/>
<dbReference type="RefSeq" id="NP_001004465.1">
    <property type="nucleotide sequence ID" value="NM_001004465.1"/>
</dbReference>
<dbReference type="SMR" id="Q8NGA5"/>
<dbReference type="FunCoup" id="Q8NGA5">
    <property type="interactions" value="447"/>
</dbReference>
<dbReference type="STRING" id="9606.ENSP00000318834"/>
<dbReference type="GlyCosmos" id="Q8NGA5">
    <property type="glycosylation" value="1 site, No reported glycans"/>
</dbReference>
<dbReference type="GlyGen" id="Q8NGA5">
    <property type="glycosylation" value="2 sites"/>
</dbReference>
<dbReference type="iPTMnet" id="Q8NGA5"/>
<dbReference type="PhosphoSitePlus" id="Q8NGA5"/>
<dbReference type="BioMuta" id="OR10H4"/>
<dbReference type="DMDM" id="38372653"/>
<dbReference type="MassIVE" id="Q8NGA5"/>
<dbReference type="PaxDb" id="9606-ENSP00000318834"/>
<dbReference type="PeptideAtlas" id="Q8NGA5"/>
<dbReference type="Antibodypedia" id="57129">
    <property type="antibodies" value="96 antibodies from 18 providers"/>
</dbReference>
<dbReference type="DNASU" id="126541"/>
<dbReference type="Ensembl" id="ENST00000322107.1">
    <property type="protein sequence ID" value="ENSP00000318834.1"/>
    <property type="gene ID" value="ENSG00000176231.2"/>
</dbReference>
<dbReference type="GeneID" id="126541"/>
<dbReference type="KEGG" id="hsa:126541"/>
<dbReference type="MANE-Select" id="ENST00000322107.1">
    <property type="protein sequence ID" value="ENSP00000318834.1"/>
    <property type="RefSeq nucleotide sequence ID" value="NM_001004465.1"/>
    <property type="RefSeq protein sequence ID" value="NP_001004465.1"/>
</dbReference>
<dbReference type="UCSC" id="uc010xov.2">
    <property type="organism name" value="human"/>
</dbReference>
<dbReference type="AGR" id="HGNC:15388"/>
<dbReference type="CTD" id="126541"/>
<dbReference type="GeneCards" id="OR10H4"/>
<dbReference type="HGNC" id="HGNC:15388">
    <property type="gene designation" value="OR10H4"/>
</dbReference>
<dbReference type="HPA" id="ENSG00000176231">
    <property type="expression patterns" value="Not detected"/>
</dbReference>
<dbReference type="neXtProt" id="NX_Q8NGA5"/>
<dbReference type="OpenTargets" id="ENSG00000176231"/>
<dbReference type="PharmGKB" id="PA31980"/>
<dbReference type="VEuPathDB" id="HostDB:ENSG00000176231"/>
<dbReference type="eggNOG" id="ENOG502SJHK">
    <property type="taxonomic scope" value="Eukaryota"/>
</dbReference>
<dbReference type="GeneTree" id="ENSGT01090000260045"/>
<dbReference type="HOGENOM" id="CLU_012526_1_0_1"/>
<dbReference type="InParanoid" id="Q8NGA5"/>
<dbReference type="OMA" id="SCAGQMF"/>
<dbReference type="OrthoDB" id="9975554at2759"/>
<dbReference type="PAN-GO" id="Q8NGA5">
    <property type="GO annotations" value="6 GO annotations based on evolutionary models"/>
</dbReference>
<dbReference type="PhylomeDB" id="Q8NGA5"/>
<dbReference type="TreeFam" id="TF338279"/>
<dbReference type="PathwayCommons" id="Q8NGA5"/>
<dbReference type="Reactome" id="R-HSA-9752946">
    <property type="pathway name" value="Expression and translocation of olfactory receptors"/>
</dbReference>
<dbReference type="SignaLink" id="Q8NGA5"/>
<dbReference type="BioGRID-ORCS" id="126541">
    <property type="hits" value="10 hits in 697 CRISPR screens"/>
</dbReference>
<dbReference type="GeneWiki" id="OR10H4"/>
<dbReference type="GenomeRNAi" id="126541"/>
<dbReference type="Pharos" id="Q8NGA5">
    <property type="development level" value="Tdark"/>
</dbReference>
<dbReference type="PRO" id="PR:Q8NGA5"/>
<dbReference type="Proteomes" id="UP000005640">
    <property type="component" value="Chromosome 19"/>
</dbReference>
<dbReference type="RNAct" id="Q8NGA5">
    <property type="molecule type" value="protein"/>
</dbReference>
<dbReference type="Bgee" id="ENSG00000176231">
    <property type="expression patterns" value="Expressed in heart left ventricle"/>
</dbReference>
<dbReference type="ExpressionAtlas" id="Q8NGA5">
    <property type="expression patterns" value="baseline and differential"/>
</dbReference>
<dbReference type="GO" id="GO:0005886">
    <property type="term" value="C:plasma membrane"/>
    <property type="evidence" value="ECO:0000318"/>
    <property type="project" value="GO_Central"/>
</dbReference>
<dbReference type="GO" id="GO:0004930">
    <property type="term" value="F:G protein-coupled receptor activity"/>
    <property type="evidence" value="ECO:0007669"/>
    <property type="project" value="UniProtKB-KW"/>
</dbReference>
<dbReference type="GO" id="GO:0004984">
    <property type="term" value="F:olfactory receptor activity"/>
    <property type="evidence" value="ECO:0000318"/>
    <property type="project" value="GO_Central"/>
</dbReference>
<dbReference type="GO" id="GO:0050911">
    <property type="term" value="P:detection of chemical stimulus involved in sensory perception of smell"/>
    <property type="evidence" value="ECO:0000318"/>
    <property type="project" value="GO_Central"/>
</dbReference>
<dbReference type="CDD" id="cd15225">
    <property type="entry name" value="7tmA_OR10A-like"/>
    <property type="match status" value="1"/>
</dbReference>
<dbReference type="FunFam" id="1.20.1070.10:FF:000110">
    <property type="entry name" value="olfactory receptor 10H1-like"/>
    <property type="match status" value="1"/>
</dbReference>
<dbReference type="Gene3D" id="1.20.1070.10">
    <property type="entry name" value="Rhodopsin 7-helix transmembrane proteins"/>
    <property type="match status" value="1"/>
</dbReference>
<dbReference type="InterPro" id="IPR000276">
    <property type="entry name" value="GPCR_Rhodpsn"/>
</dbReference>
<dbReference type="InterPro" id="IPR017452">
    <property type="entry name" value="GPCR_Rhodpsn_7TM"/>
</dbReference>
<dbReference type="InterPro" id="IPR000725">
    <property type="entry name" value="Olfact_rcpt"/>
</dbReference>
<dbReference type="PANTHER" id="PTHR26453">
    <property type="entry name" value="OLFACTORY RECEPTOR"/>
    <property type="match status" value="1"/>
</dbReference>
<dbReference type="Pfam" id="PF13853">
    <property type="entry name" value="7tm_4"/>
    <property type="match status" value="1"/>
</dbReference>
<dbReference type="PRINTS" id="PR00237">
    <property type="entry name" value="GPCRRHODOPSN"/>
</dbReference>
<dbReference type="PRINTS" id="PR00245">
    <property type="entry name" value="OLFACTORYR"/>
</dbReference>
<dbReference type="SUPFAM" id="SSF81321">
    <property type="entry name" value="Family A G protein-coupled receptor-like"/>
    <property type="match status" value="1"/>
</dbReference>
<dbReference type="PROSITE" id="PS50262">
    <property type="entry name" value="G_PROTEIN_RECEP_F1_2"/>
    <property type="match status" value="1"/>
</dbReference>
<comment type="function">
    <text evidence="3">Odorant receptor.</text>
</comment>
<comment type="subcellular location">
    <subcellularLocation>
        <location>Cell membrane</location>
        <topology>Multi-pass membrane protein</topology>
    </subcellularLocation>
</comment>
<comment type="similarity">
    <text evidence="2">Belongs to the G-protein coupled receptor 1 family.</text>
</comment>
<comment type="online information" name="Human Olfactory Receptor Data Exploratorium (HORDE)">
    <link uri="http://genome.weizmann.ac.il/horde/card/index/symbol:OR10H4"/>
</comment>
<evidence type="ECO:0000255" key="1"/>
<evidence type="ECO:0000255" key="2">
    <source>
        <dbReference type="PROSITE-ProRule" id="PRU00521"/>
    </source>
</evidence>
<evidence type="ECO:0000305" key="3"/>
<sequence>MPSQNYSIISEFNLFGFSAFPQHLLPILFLLYLLMFLFTLLGNLLIMATIWIEHRLHTPMYLFLCTLSVSEILFTVAITPRMLADLLSTHHSITFVACANQMFFSFMFGFTHSFLLLVMGYDRYVAICHPLRYNVLMSPRDCAHLVACTWAGGSVMGMMVTTIVFHLTFCGSNVIHHFFCHVLSLLKLACENKTSSVIMGVMLVCVTALIGCLFLIILSYVFIVAAILRIPSAEGRHKTFSTCVSHLTVVVTHYSFASFIYLKPKGLHSMYSDALMATTYTVFTPFLSPIIFSLRNKELKNAINKNFYRKFCPPSS</sequence>